<proteinExistence type="inferred from homology"/>
<sequence length="266" mass="29774">MRLIPLTTAEQVGKWAARHIVNRINAFKPTADRPFVLGLPTGGTPMTTYKALVEMHKAGQVSFKHVVTFNMDEYVGLPKEHPESYYSFMHRNFFDHVDIPAENINLLNGNAPDIDAECRQYEEKIRSYGKIHLFMGGVGNDGHIAFNEPASSLASRTRIKTLTHDTRVANSRFFDNDVNQVPKYALTVGVGTLLDAEEVMILVLGSQKALALQAAVEGCVNHMWTISCLQLHPKAIMVCDEPSTMELKVKTLRYFNELEAENIKGL</sequence>
<evidence type="ECO:0000255" key="1">
    <source>
        <dbReference type="HAMAP-Rule" id="MF_01241"/>
    </source>
</evidence>
<feature type="chain" id="PRO_1000165019" description="Glucosamine-6-phosphate deaminase">
    <location>
        <begin position="1"/>
        <end position="266"/>
    </location>
</feature>
<feature type="active site" description="Proton acceptor; for enolization step" evidence="1">
    <location>
        <position position="72"/>
    </location>
</feature>
<feature type="active site" description="For ring-opening step" evidence="1">
    <location>
        <position position="141"/>
    </location>
</feature>
<feature type="active site" description="Proton acceptor; for ring-opening step" evidence="1">
    <location>
        <position position="143"/>
    </location>
</feature>
<feature type="active site" description="For ring-opening step" evidence="1">
    <location>
        <position position="148"/>
    </location>
</feature>
<feature type="site" description="Part of the allosteric site" evidence="1">
    <location>
        <position position="151"/>
    </location>
</feature>
<feature type="site" description="Part of the allosteric site" evidence="1">
    <location>
        <position position="158"/>
    </location>
</feature>
<feature type="site" description="Part of the allosteric site" evidence="1">
    <location>
        <position position="160"/>
    </location>
</feature>
<feature type="site" description="Part of the allosteric site" evidence="1">
    <location>
        <position position="161"/>
    </location>
</feature>
<feature type="site" description="Part of the allosteric site" evidence="1">
    <location>
        <position position="254"/>
    </location>
</feature>
<feature type="disulfide bond" description="Interchain" evidence="1">
    <location>
        <position position="219"/>
    </location>
</feature>
<reference key="1">
    <citation type="journal article" date="2009" name="PLoS Genet.">
        <title>Organised genome dynamics in the Escherichia coli species results in highly diverse adaptive paths.</title>
        <authorList>
            <person name="Touchon M."/>
            <person name="Hoede C."/>
            <person name="Tenaillon O."/>
            <person name="Barbe V."/>
            <person name="Baeriswyl S."/>
            <person name="Bidet P."/>
            <person name="Bingen E."/>
            <person name="Bonacorsi S."/>
            <person name="Bouchier C."/>
            <person name="Bouvet O."/>
            <person name="Calteau A."/>
            <person name="Chiapello H."/>
            <person name="Clermont O."/>
            <person name="Cruveiller S."/>
            <person name="Danchin A."/>
            <person name="Diard M."/>
            <person name="Dossat C."/>
            <person name="Karoui M.E."/>
            <person name="Frapy E."/>
            <person name="Garry L."/>
            <person name="Ghigo J.M."/>
            <person name="Gilles A.M."/>
            <person name="Johnson J."/>
            <person name="Le Bouguenec C."/>
            <person name="Lescat M."/>
            <person name="Mangenot S."/>
            <person name="Martinez-Jehanne V."/>
            <person name="Matic I."/>
            <person name="Nassif X."/>
            <person name="Oztas S."/>
            <person name="Petit M.A."/>
            <person name="Pichon C."/>
            <person name="Rouy Z."/>
            <person name="Ruf C.S."/>
            <person name="Schneider D."/>
            <person name="Tourret J."/>
            <person name="Vacherie B."/>
            <person name="Vallenet D."/>
            <person name="Medigue C."/>
            <person name="Rocha E.P.C."/>
            <person name="Denamur E."/>
        </authorList>
    </citation>
    <scope>NUCLEOTIDE SEQUENCE [LARGE SCALE GENOMIC DNA]</scope>
    <source>
        <strain>ED1a</strain>
    </source>
</reference>
<comment type="function">
    <text evidence="1">Catalyzes the reversible isomerization-deamination of glucosamine 6-phosphate (GlcN6P) to form fructose 6-phosphate (Fru6P) and ammonium ion.</text>
</comment>
<comment type="catalytic activity">
    <reaction evidence="1">
        <text>alpha-D-glucosamine 6-phosphate + H2O = beta-D-fructose 6-phosphate + NH4(+)</text>
        <dbReference type="Rhea" id="RHEA:12172"/>
        <dbReference type="ChEBI" id="CHEBI:15377"/>
        <dbReference type="ChEBI" id="CHEBI:28938"/>
        <dbReference type="ChEBI" id="CHEBI:57634"/>
        <dbReference type="ChEBI" id="CHEBI:75989"/>
        <dbReference type="EC" id="3.5.99.6"/>
    </reaction>
</comment>
<comment type="activity regulation">
    <text evidence="1">Allosterically activated by N-acetylglucosamine 6-phosphate (GlcNAc6P).</text>
</comment>
<comment type="pathway">
    <text evidence="1">Amino-sugar metabolism; N-acetylneuraminate degradation; D-fructose 6-phosphate from N-acetylneuraminate: step 5/5.</text>
</comment>
<comment type="subunit">
    <text evidence="1">Homohexamer; trimer of disulfide-linked dimers.</text>
</comment>
<comment type="similarity">
    <text evidence="1">Belongs to the glucosamine/galactosamine-6-phosphate isomerase family. NagB subfamily.</text>
</comment>
<organism>
    <name type="scientific">Escherichia coli O81 (strain ED1a)</name>
    <dbReference type="NCBI Taxonomy" id="585397"/>
    <lineage>
        <taxon>Bacteria</taxon>
        <taxon>Pseudomonadati</taxon>
        <taxon>Pseudomonadota</taxon>
        <taxon>Gammaproteobacteria</taxon>
        <taxon>Enterobacterales</taxon>
        <taxon>Enterobacteriaceae</taxon>
        <taxon>Escherichia</taxon>
    </lineage>
</organism>
<gene>
    <name evidence="1" type="primary">nagB</name>
    <name type="ordered locus">ECED1_0659</name>
</gene>
<accession>B7MPI3</accession>
<name>NAGB_ECO81</name>
<keyword id="KW-0021">Allosteric enzyme</keyword>
<keyword id="KW-0119">Carbohydrate metabolism</keyword>
<keyword id="KW-1015">Disulfide bond</keyword>
<keyword id="KW-0378">Hydrolase</keyword>
<protein>
    <recommendedName>
        <fullName evidence="1">Glucosamine-6-phosphate deaminase</fullName>
        <ecNumber evidence="1">3.5.99.6</ecNumber>
    </recommendedName>
    <alternativeName>
        <fullName evidence="1">GlcN6P deaminase</fullName>
        <shortName evidence="1">GNPDA</shortName>
    </alternativeName>
    <alternativeName>
        <fullName evidence="1">Glucosamine-6-phosphate isomerase</fullName>
    </alternativeName>
</protein>
<dbReference type="EC" id="3.5.99.6" evidence="1"/>
<dbReference type="EMBL" id="CU928162">
    <property type="protein sequence ID" value="CAR06865.1"/>
    <property type="molecule type" value="Genomic_DNA"/>
</dbReference>
<dbReference type="RefSeq" id="WP_001237072.1">
    <property type="nucleotide sequence ID" value="NC_011745.1"/>
</dbReference>
<dbReference type="SMR" id="B7MPI3"/>
<dbReference type="GeneID" id="93776807"/>
<dbReference type="KEGG" id="ecq:ECED1_0659"/>
<dbReference type="HOGENOM" id="CLU_049611_0_1_6"/>
<dbReference type="UniPathway" id="UPA00629">
    <property type="reaction ID" value="UER00684"/>
</dbReference>
<dbReference type="Proteomes" id="UP000000748">
    <property type="component" value="Chromosome"/>
</dbReference>
<dbReference type="GO" id="GO:0005829">
    <property type="term" value="C:cytosol"/>
    <property type="evidence" value="ECO:0007669"/>
    <property type="project" value="TreeGrafter"/>
</dbReference>
<dbReference type="GO" id="GO:0004342">
    <property type="term" value="F:glucosamine-6-phosphate deaminase activity"/>
    <property type="evidence" value="ECO:0007669"/>
    <property type="project" value="UniProtKB-UniRule"/>
</dbReference>
<dbReference type="GO" id="GO:0042802">
    <property type="term" value="F:identical protein binding"/>
    <property type="evidence" value="ECO:0007669"/>
    <property type="project" value="TreeGrafter"/>
</dbReference>
<dbReference type="GO" id="GO:0005975">
    <property type="term" value="P:carbohydrate metabolic process"/>
    <property type="evidence" value="ECO:0007669"/>
    <property type="project" value="InterPro"/>
</dbReference>
<dbReference type="GO" id="GO:0006043">
    <property type="term" value="P:glucosamine catabolic process"/>
    <property type="evidence" value="ECO:0007669"/>
    <property type="project" value="TreeGrafter"/>
</dbReference>
<dbReference type="GO" id="GO:0006046">
    <property type="term" value="P:N-acetylglucosamine catabolic process"/>
    <property type="evidence" value="ECO:0007669"/>
    <property type="project" value="TreeGrafter"/>
</dbReference>
<dbReference type="GO" id="GO:0019262">
    <property type="term" value="P:N-acetylneuraminate catabolic process"/>
    <property type="evidence" value="ECO:0007669"/>
    <property type="project" value="UniProtKB-UniRule"/>
</dbReference>
<dbReference type="CDD" id="cd01399">
    <property type="entry name" value="GlcN6P_deaminase"/>
    <property type="match status" value="1"/>
</dbReference>
<dbReference type="FunFam" id="3.40.50.1360:FF:000002">
    <property type="entry name" value="Glucosamine-6-phosphate deaminase"/>
    <property type="match status" value="1"/>
</dbReference>
<dbReference type="Gene3D" id="3.40.50.1360">
    <property type="match status" value="1"/>
</dbReference>
<dbReference type="HAMAP" id="MF_01241">
    <property type="entry name" value="GlcN6P_deamin"/>
    <property type="match status" value="1"/>
</dbReference>
<dbReference type="InterPro" id="IPR006148">
    <property type="entry name" value="Glc/Gal-6P_isomerase"/>
</dbReference>
<dbReference type="InterPro" id="IPR004547">
    <property type="entry name" value="Glucosamine6P_isomerase"/>
</dbReference>
<dbReference type="InterPro" id="IPR018321">
    <property type="entry name" value="Glucosamine6P_isomerase_CS"/>
</dbReference>
<dbReference type="InterPro" id="IPR037171">
    <property type="entry name" value="NagB/RpiA_transferase-like"/>
</dbReference>
<dbReference type="NCBIfam" id="TIGR00502">
    <property type="entry name" value="nagB"/>
    <property type="match status" value="1"/>
</dbReference>
<dbReference type="NCBIfam" id="NF001685">
    <property type="entry name" value="PRK00443.1-5"/>
    <property type="match status" value="1"/>
</dbReference>
<dbReference type="PANTHER" id="PTHR11280">
    <property type="entry name" value="GLUCOSAMINE-6-PHOSPHATE ISOMERASE"/>
    <property type="match status" value="1"/>
</dbReference>
<dbReference type="PANTHER" id="PTHR11280:SF5">
    <property type="entry name" value="GLUCOSAMINE-6-PHOSPHATE ISOMERASE"/>
    <property type="match status" value="1"/>
</dbReference>
<dbReference type="Pfam" id="PF01182">
    <property type="entry name" value="Glucosamine_iso"/>
    <property type="match status" value="1"/>
</dbReference>
<dbReference type="SUPFAM" id="SSF100950">
    <property type="entry name" value="NagB/RpiA/CoA transferase-like"/>
    <property type="match status" value="1"/>
</dbReference>
<dbReference type="PROSITE" id="PS01161">
    <property type="entry name" value="GLC_GALNAC_ISOMERASE"/>
    <property type="match status" value="1"/>
</dbReference>